<sequence>MQKPWVEKYRPENLDEVVGHQEIIKRLKNYVEKKSMPHLLFSGSPGVGKTTAALCLAKDLYGNTWKENFLELNSSDERGIDVIRTKVKDFARTKPIGDAPFKVIFLDESDALTSDAQNALRRTMEKYSDICRFVLSCNYPSKIIPPIQSRCAIFRFSPLKTEDLVKNLKEISEKESINVEKSGMDAIIYVSEGDMRKAINVLQTGAAVSKNINETVIYKVASKARPDEIKKMTELALNGKFVEAREQLYKLMIDWGMSGEDIIIQIFREVPNLEISEKEKVHLVEAIGECDFRIVEGANERIQLSALLAKMGILE</sequence>
<protein>
    <recommendedName>
        <fullName evidence="1">Replication factor C small subunit</fullName>
        <shortName evidence="1">RFC small subunit</shortName>
    </recommendedName>
    <alternativeName>
        <fullName evidence="1">Clamp loader small subunit</fullName>
    </alternativeName>
</protein>
<organism>
    <name type="scientific">Methanococcus vannielii (strain ATCC 35089 / DSM 1224 / JCM 13029 / OCM 148 / SB)</name>
    <dbReference type="NCBI Taxonomy" id="406327"/>
    <lineage>
        <taxon>Archaea</taxon>
        <taxon>Methanobacteriati</taxon>
        <taxon>Methanobacteriota</taxon>
        <taxon>Methanomada group</taxon>
        <taxon>Methanococci</taxon>
        <taxon>Methanococcales</taxon>
        <taxon>Methanococcaceae</taxon>
        <taxon>Methanococcus</taxon>
    </lineage>
</organism>
<keyword id="KW-0067">ATP-binding</keyword>
<keyword id="KW-0235">DNA replication</keyword>
<keyword id="KW-0547">Nucleotide-binding</keyword>
<reference key="1">
    <citation type="submission" date="2007-06" db="EMBL/GenBank/DDBJ databases">
        <title>Complete sequence of Methanococcus vannielii SB.</title>
        <authorList>
            <consortium name="US DOE Joint Genome Institute"/>
            <person name="Copeland A."/>
            <person name="Lucas S."/>
            <person name="Lapidus A."/>
            <person name="Barry K."/>
            <person name="Glavina del Rio T."/>
            <person name="Dalin E."/>
            <person name="Tice H."/>
            <person name="Pitluck S."/>
            <person name="Chain P."/>
            <person name="Malfatti S."/>
            <person name="Shin M."/>
            <person name="Vergez L."/>
            <person name="Schmutz J."/>
            <person name="Larimer F."/>
            <person name="Land M."/>
            <person name="Hauser L."/>
            <person name="Kyrpides N."/>
            <person name="Anderson I."/>
            <person name="Sieprawska-Lupa M."/>
            <person name="Whitman W.B."/>
            <person name="Richardson P."/>
        </authorList>
    </citation>
    <scope>NUCLEOTIDE SEQUENCE [LARGE SCALE GENOMIC DNA]</scope>
    <source>
        <strain>ATCC 35089 / DSM 1224 / JCM 13029 / OCM 148 / SB</strain>
    </source>
</reference>
<accession>A6US36</accession>
<feature type="chain" id="PRO_1000024489" description="Replication factor C small subunit">
    <location>
        <begin position="1"/>
        <end position="315"/>
    </location>
</feature>
<feature type="binding site" evidence="1">
    <location>
        <begin position="43"/>
        <end position="50"/>
    </location>
    <ligand>
        <name>ATP</name>
        <dbReference type="ChEBI" id="CHEBI:30616"/>
    </ligand>
</feature>
<dbReference type="EMBL" id="CP000742">
    <property type="protein sequence ID" value="ABR55308.1"/>
    <property type="molecule type" value="Genomic_DNA"/>
</dbReference>
<dbReference type="RefSeq" id="WP_012066222.1">
    <property type="nucleotide sequence ID" value="NC_009634.1"/>
</dbReference>
<dbReference type="SMR" id="A6US36"/>
<dbReference type="STRING" id="406327.Mevan_1412"/>
<dbReference type="GeneID" id="5324864"/>
<dbReference type="KEGG" id="mvn:Mevan_1412"/>
<dbReference type="eggNOG" id="arCOG00469">
    <property type="taxonomic scope" value="Archaea"/>
</dbReference>
<dbReference type="HOGENOM" id="CLU_042324_2_1_2"/>
<dbReference type="OrthoDB" id="7928at2157"/>
<dbReference type="Proteomes" id="UP000001107">
    <property type="component" value="Chromosome"/>
</dbReference>
<dbReference type="GO" id="GO:0005663">
    <property type="term" value="C:DNA replication factor C complex"/>
    <property type="evidence" value="ECO:0007669"/>
    <property type="project" value="InterPro"/>
</dbReference>
<dbReference type="GO" id="GO:0005524">
    <property type="term" value="F:ATP binding"/>
    <property type="evidence" value="ECO:0007669"/>
    <property type="project" value="UniProtKB-UniRule"/>
</dbReference>
<dbReference type="GO" id="GO:0016887">
    <property type="term" value="F:ATP hydrolysis activity"/>
    <property type="evidence" value="ECO:0007669"/>
    <property type="project" value="InterPro"/>
</dbReference>
<dbReference type="GO" id="GO:0003677">
    <property type="term" value="F:DNA binding"/>
    <property type="evidence" value="ECO:0007669"/>
    <property type="project" value="InterPro"/>
</dbReference>
<dbReference type="GO" id="GO:0003689">
    <property type="term" value="F:DNA clamp loader activity"/>
    <property type="evidence" value="ECO:0007669"/>
    <property type="project" value="UniProtKB-UniRule"/>
</dbReference>
<dbReference type="GO" id="GO:0006281">
    <property type="term" value="P:DNA repair"/>
    <property type="evidence" value="ECO:0007669"/>
    <property type="project" value="TreeGrafter"/>
</dbReference>
<dbReference type="GO" id="GO:0006261">
    <property type="term" value="P:DNA-templated DNA replication"/>
    <property type="evidence" value="ECO:0007669"/>
    <property type="project" value="TreeGrafter"/>
</dbReference>
<dbReference type="CDD" id="cd00009">
    <property type="entry name" value="AAA"/>
    <property type="match status" value="1"/>
</dbReference>
<dbReference type="CDD" id="cd18140">
    <property type="entry name" value="HLD_clamp_RFC"/>
    <property type="match status" value="1"/>
</dbReference>
<dbReference type="FunFam" id="1.20.272.10:FF:000029">
    <property type="entry name" value="Replication factor C small subunit"/>
    <property type="match status" value="1"/>
</dbReference>
<dbReference type="FunFam" id="3.40.50.300:FF:000129">
    <property type="entry name" value="Replication factor C subunit 5"/>
    <property type="match status" value="1"/>
</dbReference>
<dbReference type="Gene3D" id="1.10.8.60">
    <property type="match status" value="1"/>
</dbReference>
<dbReference type="Gene3D" id="1.20.272.10">
    <property type="match status" value="1"/>
</dbReference>
<dbReference type="Gene3D" id="3.40.50.300">
    <property type="entry name" value="P-loop containing nucleotide triphosphate hydrolases"/>
    <property type="match status" value="1"/>
</dbReference>
<dbReference type="HAMAP" id="MF_01509">
    <property type="entry name" value="RfcS"/>
    <property type="match status" value="1"/>
</dbReference>
<dbReference type="InterPro" id="IPR003593">
    <property type="entry name" value="AAA+_ATPase"/>
</dbReference>
<dbReference type="InterPro" id="IPR003959">
    <property type="entry name" value="ATPase_AAA_core"/>
</dbReference>
<dbReference type="InterPro" id="IPR008921">
    <property type="entry name" value="DNA_pol3_clamp-load_cplx_C"/>
</dbReference>
<dbReference type="InterPro" id="IPR050238">
    <property type="entry name" value="DNA_Rep/Repair_Clamp_Loader"/>
</dbReference>
<dbReference type="InterPro" id="IPR027417">
    <property type="entry name" value="P-loop_NTPase"/>
</dbReference>
<dbReference type="InterPro" id="IPR023748">
    <property type="entry name" value="Rep_factor-C_ssu_arc"/>
</dbReference>
<dbReference type="InterPro" id="IPR013748">
    <property type="entry name" value="Rep_factorC_C"/>
</dbReference>
<dbReference type="InterPro" id="IPR047854">
    <property type="entry name" value="RFC_lid"/>
</dbReference>
<dbReference type="NCBIfam" id="NF001679">
    <property type="entry name" value="PRK00440.1"/>
    <property type="match status" value="1"/>
</dbReference>
<dbReference type="PANTHER" id="PTHR11669">
    <property type="entry name" value="REPLICATION FACTOR C / DNA POLYMERASE III GAMMA-TAU SUBUNIT"/>
    <property type="match status" value="1"/>
</dbReference>
<dbReference type="PANTHER" id="PTHR11669:SF20">
    <property type="entry name" value="REPLICATION FACTOR C SUBUNIT 4"/>
    <property type="match status" value="1"/>
</dbReference>
<dbReference type="Pfam" id="PF00004">
    <property type="entry name" value="AAA"/>
    <property type="match status" value="1"/>
</dbReference>
<dbReference type="Pfam" id="PF21960">
    <property type="entry name" value="RCF1-5-like_lid"/>
    <property type="match status" value="1"/>
</dbReference>
<dbReference type="Pfam" id="PF08542">
    <property type="entry name" value="Rep_fac_C"/>
    <property type="match status" value="1"/>
</dbReference>
<dbReference type="SMART" id="SM00382">
    <property type="entry name" value="AAA"/>
    <property type="match status" value="1"/>
</dbReference>
<dbReference type="SUPFAM" id="SSF52540">
    <property type="entry name" value="P-loop containing nucleoside triphosphate hydrolases"/>
    <property type="match status" value="1"/>
</dbReference>
<dbReference type="SUPFAM" id="SSF48019">
    <property type="entry name" value="post-AAA+ oligomerization domain-like"/>
    <property type="match status" value="1"/>
</dbReference>
<gene>
    <name evidence="1" type="primary">rfcS</name>
    <name type="ordered locus">Mevan_1412</name>
</gene>
<evidence type="ECO:0000255" key="1">
    <source>
        <dbReference type="HAMAP-Rule" id="MF_01509"/>
    </source>
</evidence>
<name>RFCS_METVS</name>
<proteinExistence type="inferred from homology"/>
<comment type="function">
    <text evidence="1">Part of the RFC clamp loader complex which loads the PCNA sliding clamp onto DNA.</text>
</comment>
<comment type="subunit">
    <text evidence="1">Heteromultimer composed of small subunits (RfcS) and large subunits (RfcL).</text>
</comment>
<comment type="similarity">
    <text evidence="1">Belongs to the activator 1 small subunits family. RfcS subfamily.</text>
</comment>